<organism>
    <name type="scientific">Escherichia coli O157:H7</name>
    <dbReference type="NCBI Taxonomy" id="83334"/>
    <lineage>
        <taxon>Bacteria</taxon>
        <taxon>Pseudomonadati</taxon>
        <taxon>Pseudomonadota</taxon>
        <taxon>Gammaproteobacteria</taxon>
        <taxon>Enterobacterales</taxon>
        <taxon>Enterobacteriaceae</taxon>
        <taxon>Escherichia</taxon>
    </lineage>
</organism>
<accession>P0AA18</accession>
<accession>O31133</accession>
<accession>P03025</accession>
<accession>P08981</accession>
<accession>P41405</accession>
<protein>
    <recommendedName>
        <fullName evidence="4">DNA-binding dual transcriptional regulator OmpR</fullName>
    </recommendedName>
    <alternativeName>
        <fullName>Transcriptional regulatory protein OmpR</fullName>
    </alternativeName>
</protein>
<sequence length="239" mass="27354">MQENYKILVVDDDMRLRALLERYLTEQGFQVRSVANAEQMDRLLTRESFHLMVLDLMLPGEDGLSICRRLRSQSNPMPIIMVTAKGEEVDRIVGLEIGADDYIPKPFNPRELLARIRAVLRRQANELPGAPSQEEAVIAFGKFKLNLGTREMFREDEPMPLTSGEFAVLKALVSHPREPLSRDKLMNLARGREYSAMERSIDVQISRLRRMVEEDPAHPRYIQTVWGLGYVFVPDGSKA</sequence>
<dbReference type="EMBL" id="AE005174">
    <property type="protein sequence ID" value="AAG58506.1"/>
    <property type="molecule type" value="Genomic_DNA"/>
</dbReference>
<dbReference type="EMBL" id="BA000007">
    <property type="protein sequence ID" value="BAB37670.1"/>
    <property type="molecule type" value="Genomic_DNA"/>
</dbReference>
<dbReference type="PIR" id="F86005">
    <property type="entry name" value="F86005"/>
</dbReference>
<dbReference type="PIR" id="G91159">
    <property type="entry name" value="G91159"/>
</dbReference>
<dbReference type="RefSeq" id="NP_312274.1">
    <property type="nucleotide sequence ID" value="NC_002695.1"/>
</dbReference>
<dbReference type="RefSeq" id="WP_001157751.1">
    <property type="nucleotide sequence ID" value="NZ_VOAI01000004.1"/>
</dbReference>
<dbReference type="SMR" id="P0AA18"/>
<dbReference type="STRING" id="155864.Z4760"/>
<dbReference type="GeneID" id="915896"/>
<dbReference type="GeneID" id="98390506"/>
<dbReference type="KEGG" id="ece:Z4760"/>
<dbReference type="KEGG" id="ecs:ECs_4247"/>
<dbReference type="PATRIC" id="fig|386585.9.peg.4435"/>
<dbReference type="eggNOG" id="COG0745">
    <property type="taxonomic scope" value="Bacteria"/>
</dbReference>
<dbReference type="HOGENOM" id="CLU_000445_30_4_6"/>
<dbReference type="OMA" id="HSGFDVQ"/>
<dbReference type="Proteomes" id="UP000000558">
    <property type="component" value="Chromosome"/>
</dbReference>
<dbReference type="Proteomes" id="UP000002519">
    <property type="component" value="Chromosome"/>
</dbReference>
<dbReference type="GO" id="GO:0005829">
    <property type="term" value="C:cytosol"/>
    <property type="evidence" value="ECO:0007669"/>
    <property type="project" value="TreeGrafter"/>
</dbReference>
<dbReference type="GO" id="GO:0032993">
    <property type="term" value="C:protein-DNA complex"/>
    <property type="evidence" value="ECO:0007669"/>
    <property type="project" value="TreeGrafter"/>
</dbReference>
<dbReference type="GO" id="GO:0000156">
    <property type="term" value="F:phosphorelay response regulator activity"/>
    <property type="evidence" value="ECO:0007669"/>
    <property type="project" value="TreeGrafter"/>
</dbReference>
<dbReference type="GO" id="GO:0000976">
    <property type="term" value="F:transcription cis-regulatory region binding"/>
    <property type="evidence" value="ECO:0007669"/>
    <property type="project" value="TreeGrafter"/>
</dbReference>
<dbReference type="GO" id="GO:0006355">
    <property type="term" value="P:regulation of DNA-templated transcription"/>
    <property type="evidence" value="ECO:0007669"/>
    <property type="project" value="InterPro"/>
</dbReference>
<dbReference type="CDD" id="cd00383">
    <property type="entry name" value="trans_reg_C"/>
    <property type="match status" value="1"/>
</dbReference>
<dbReference type="FunFam" id="1.10.10.10:FF:000023">
    <property type="entry name" value="Two-component response regulator OmpR"/>
    <property type="match status" value="1"/>
</dbReference>
<dbReference type="FunFam" id="3.40.50.2300:FF:000008">
    <property type="entry name" value="Two-component response regulator OmpR"/>
    <property type="match status" value="1"/>
</dbReference>
<dbReference type="Gene3D" id="3.40.50.2300">
    <property type="match status" value="1"/>
</dbReference>
<dbReference type="Gene3D" id="6.10.250.690">
    <property type="match status" value="1"/>
</dbReference>
<dbReference type="Gene3D" id="1.10.10.10">
    <property type="entry name" value="Winged helix-like DNA-binding domain superfamily/Winged helix DNA-binding domain"/>
    <property type="match status" value="1"/>
</dbReference>
<dbReference type="InterPro" id="IPR011006">
    <property type="entry name" value="CheY-like_superfamily"/>
</dbReference>
<dbReference type="InterPro" id="IPR001867">
    <property type="entry name" value="OmpR/PhoB-type_DNA-bd"/>
</dbReference>
<dbReference type="InterPro" id="IPR016032">
    <property type="entry name" value="Sig_transdc_resp-reg_C-effctor"/>
</dbReference>
<dbReference type="InterPro" id="IPR001789">
    <property type="entry name" value="Sig_transdc_resp-reg_receiver"/>
</dbReference>
<dbReference type="InterPro" id="IPR039420">
    <property type="entry name" value="WalR-like"/>
</dbReference>
<dbReference type="InterPro" id="IPR036388">
    <property type="entry name" value="WH-like_DNA-bd_sf"/>
</dbReference>
<dbReference type="NCBIfam" id="NF007005">
    <property type="entry name" value="PRK09468.1"/>
    <property type="match status" value="1"/>
</dbReference>
<dbReference type="PANTHER" id="PTHR48111:SF4">
    <property type="entry name" value="DNA-BINDING DUAL TRANSCRIPTIONAL REGULATOR OMPR"/>
    <property type="match status" value="1"/>
</dbReference>
<dbReference type="PANTHER" id="PTHR48111">
    <property type="entry name" value="REGULATOR OF RPOS"/>
    <property type="match status" value="1"/>
</dbReference>
<dbReference type="Pfam" id="PF00072">
    <property type="entry name" value="Response_reg"/>
    <property type="match status" value="1"/>
</dbReference>
<dbReference type="Pfam" id="PF00486">
    <property type="entry name" value="Trans_reg_C"/>
    <property type="match status" value="1"/>
</dbReference>
<dbReference type="SMART" id="SM00448">
    <property type="entry name" value="REC"/>
    <property type="match status" value="1"/>
</dbReference>
<dbReference type="SMART" id="SM00862">
    <property type="entry name" value="Trans_reg_C"/>
    <property type="match status" value="1"/>
</dbReference>
<dbReference type="SUPFAM" id="SSF46894">
    <property type="entry name" value="C-terminal effector domain of the bipartite response regulators"/>
    <property type="match status" value="1"/>
</dbReference>
<dbReference type="SUPFAM" id="SSF52172">
    <property type="entry name" value="CheY-like"/>
    <property type="match status" value="1"/>
</dbReference>
<dbReference type="PROSITE" id="PS51755">
    <property type="entry name" value="OMPR_PHOB"/>
    <property type="match status" value="1"/>
</dbReference>
<dbReference type="PROSITE" id="PS50110">
    <property type="entry name" value="RESPONSE_REGULATORY"/>
    <property type="match status" value="1"/>
</dbReference>
<reference key="1">
    <citation type="journal article" date="2001" name="Nature">
        <title>Genome sequence of enterohaemorrhagic Escherichia coli O157:H7.</title>
        <authorList>
            <person name="Perna N.T."/>
            <person name="Plunkett G. III"/>
            <person name="Burland V."/>
            <person name="Mau B."/>
            <person name="Glasner J.D."/>
            <person name="Rose D.J."/>
            <person name="Mayhew G.F."/>
            <person name="Evans P.S."/>
            <person name="Gregor J."/>
            <person name="Kirkpatrick H.A."/>
            <person name="Posfai G."/>
            <person name="Hackett J."/>
            <person name="Klink S."/>
            <person name="Boutin A."/>
            <person name="Shao Y."/>
            <person name="Miller L."/>
            <person name="Grotbeck E.J."/>
            <person name="Davis N.W."/>
            <person name="Lim A."/>
            <person name="Dimalanta E.T."/>
            <person name="Potamousis K."/>
            <person name="Apodaca J."/>
            <person name="Anantharaman T.S."/>
            <person name="Lin J."/>
            <person name="Yen G."/>
            <person name="Schwartz D.C."/>
            <person name="Welch R.A."/>
            <person name="Blattner F.R."/>
        </authorList>
    </citation>
    <scope>NUCLEOTIDE SEQUENCE [LARGE SCALE GENOMIC DNA]</scope>
    <source>
        <strain>O157:H7 / EDL933 / ATCC 700927 / EHEC</strain>
    </source>
</reference>
<reference key="2">
    <citation type="journal article" date="2001" name="DNA Res.">
        <title>Complete genome sequence of enterohemorrhagic Escherichia coli O157:H7 and genomic comparison with a laboratory strain K-12.</title>
        <authorList>
            <person name="Hayashi T."/>
            <person name="Makino K."/>
            <person name="Ohnishi M."/>
            <person name="Kurokawa K."/>
            <person name="Ishii K."/>
            <person name="Yokoyama K."/>
            <person name="Han C.-G."/>
            <person name="Ohtsubo E."/>
            <person name="Nakayama K."/>
            <person name="Murata T."/>
            <person name="Tanaka M."/>
            <person name="Tobe T."/>
            <person name="Iida T."/>
            <person name="Takami H."/>
            <person name="Honda T."/>
            <person name="Sasakawa C."/>
            <person name="Ogasawara N."/>
            <person name="Yasunaga T."/>
            <person name="Kuhara S."/>
            <person name="Shiba T."/>
            <person name="Hattori M."/>
            <person name="Shinagawa H."/>
        </authorList>
    </citation>
    <scope>NUCLEOTIDE SEQUENCE [LARGE SCALE GENOMIC DNA]</scope>
    <source>
        <strain>O157:H7 / Sakai / RIMD 0509952 / EHEC</strain>
    </source>
</reference>
<keyword id="KW-0010">Activator</keyword>
<keyword id="KW-0963">Cytoplasm</keyword>
<keyword id="KW-0238">DNA-binding</keyword>
<keyword id="KW-0597">Phosphoprotein</keyword>
<keyword id="KW-1185">Reference proteome</keyword>
<keyword id="KW-0678">Repressor</keyword>
<keyword id="KW-0346">Stress response</keyword>
<keyword id="KW-0804">Transcription</keyword>
<keyword id="KW-0805">Transcription regulation</keyword>
<keyword id="KW-0902">Two-component regulatory system</keyword>
<comment type="function">
    <text evidence="1">Member of the two-component regulatory system EnvZ/OmpR involved in osmoregulation (particularly of genes ompF and ompC) as well as other genes. Plays a central role in both acid and osmotic stress responses. Binds to the promoter of both ompC and ompF; at low osmolarity it activates ompF transcription, while at high osmolarity it represses ompF and activates ompC transcription.</text>
</comment>
<comment type="subunit">
    <text evidence="1">Monomer and multimer.</text>
</comment>
<comment type="subcellular location">
    <subcellularLocation>
        <location evidence="1">Cytoplasm</location>
    </subcellularLocation>
</comment>
<comment type="PTM">
    <text evidence="1">Phosphorylated by EnvZ; this stimulates its DNA-binding ability. Asp-55 is the primary phosphate acceptor site.</text>
</comment>
<feature type="chain" id="PRO_0000081178" description="DNA-binding dual transcriptional regulator OmpR">
    <location>
        <begin position="1"/>
        <end position="239"/>
    </location>
</feature>
<feature type="domain" description="Response regulatory" evidence="2">
    <location>
        <begin position="6"/>
        <end position="120"/>
    </location>
</feature>
<feature type="DNA-binding region" description="OmpR/PhoB-type" evidence="3">
    <location>
        <begin position="135"/>
        <end position="234"/>
    </location>
</feature>
<feature type="modified residue" description="4-aspartylphosphate" evidence="1 2">
    <location>
        <position position="55"/>
    </location>
</feature>
<name>OMPR_ECO57</name>
<gene>
    <name type="primary">ompR</name>
    <name type="ordered locus">Z4760</name>
    <name type="ordered locus">ECs4247</name>
</gene>
<proteinExistence type="inferred from homology"/>
<evidence type="ECO:0000250" key="1">
    <source>
        <dbReference type="UniProtKB" id="P0AA16"/>
    </source>
</evidence>
<evidence type="ECO:0000255" key="2">
    <source>
        <dbReference type="PROSITE-ProRule" id="PRU00169"/>
    </source>
</evidence>
<evidence type="ECO:0000255" key="3">
    <source>
        <dbReference type="PROSITE-ProRule" id="PRU01091"/>
    </source>
</evidence>
<evidence type="ECO:0000305" key="4"/>